<evidence type="ECO:0000250" key="1"/>
<evidence type="ECO:0000256" key="2">
    <source>
        <dbReference type="SAM" id="MobiDB-lite"/>
    </source>
</evidence>
<evidence type="ECO:0000305" key="3"/>
<comment type="function">
    <text evidence="1">Regulates the GDP/GTP exchange reaction of the Rho proteins by inhibiting the dissociation of GDP from them, and the subsequent binding of GTP to them.</text>
</comment>
<comment type="subcellular location">
    <subcellularLocation>
        <location evidence="1">Cytoplasm</location>
    </subcellularLocation>
</comment>
<comment type="similarity">
    <text evidence="3">Belongs to the Rho GDI family.</text>
</comment>
<name>GDIR_CAEEL</name>
<organism>
    <name type="scientific">Caenorhabditis elegans</name>
    <dbReference type="NCBI Taxonomy" id="6239"/>
    <lineage>
        <taxon>Eukaryota</taxon>
        <taxon>Metazoa</taxon>
        <taxon>Ecdysozoa</taxon>
        <taxon>Nematoda</taxon>
        <taxon>Chromadorea</taxon>
        <taxon>Rhabditida</taxon>
        <taxon>Rhabditina</taxon>
        <taxon>Rhabditomorpha</taxon>
        <taxon>Rhabditoidea</taxon>
        <taxon>Rhabditidae</taxon>
        <taxon>Peloderinae</taxon>
        <taxon>Caenorhabditis</taxon>
    </lineage>
</organism>
<dbReference type="EMBL" id="FO080405">
    <property type="protein sequence ID" value="CCD63475.1"/>
    <property type="molecule type" value="Genomic_DNA"/>
</dbReference>
<dbReference type="PIR" id="T16379">
    <property type="entry name" value="T16379"/>
</dbReference>
<dbReference type="RefSeq" id="NP_508774.1">
    <property type="nucleotide sequence ID" value="NM_076373.9"/>
</dbReference>
<dbReference type="SMR" id="Q20496"/>
<dbReference type="BioGRID" id="45656">
    <property type="interactions" value="4"/>
</dbReference>
<dbReference type="FunCoup" id="Q20496">
    <property type="interactions" value="1522"/>
</dbReference>
<dbReference type="STRING" id="6239.F46H6.1.1"/>
<dbReference type="iPTMnet" id="Q20496"/>
<dbReference type="PaxDb" id="6239-F46H6.1"/>
<dbReference type="PeptideAtlas" id="Q20496"/>
<dbReference type="EnsemblMetazoa" id="F46H6.1.1">
    <property type="protein sequence ID" value="F46H6.1.1"/>
    <property type="gene ID" value="WBGene00004356"/>
</dbReference>
<dbReference type="GeneID" id="180721"/>
<dbReference type="KEGG" id="cel:CELE_F46H6.1"/>
<dbReference type="UCSC" id="F46H6.1.1">
    <property type="organism name" value="c. elegans"/>
</dbReference>
<dbReference type="AGR" id="WB:WBGene00004356"/>
<dbReference type="CTD" id="180721"/>
<dbReference type="WormBase" id="F46H6.1">
    <property type="protein sequence ID" value="CE04595"/>
    <property type="gene ID" value="WBGene00004356"/>
    <property type="gene designation" value="rhi-1"/>
</dbReference>
<dbReference type="eggNOG" id="KOG3205">
    <property type="taxonomic scope" value="Eukaryota"/>
</dbReference>
<dbReference type="GeneTree" id="ENSGT00390000006233"/>
<dbReference type="HOGENOM" id="CLU_076228_1_1_1"/>
<dbReference type="InParanoid" id="Q20496"/>
<dbReference type="OMA" id="HPDHHDE"/>
<dbReference type="OrthoDB" id="1683373at2759"/>
<dbReference type="PhylomeDB" id="Q20496"/>
<dbReference type="Reactome" id="R-CEL-8980692">
    <property type="pathway name" value="RHOA GTPase cycle"/>
</dbReference>
<dbReference type="Reactome" id="R-CEL-9013026">
    <property type="pathway name" value="RHOB GTPase cycle"/>
</dbReference>
<dbReference type="Reactome" id="R-CEL-9013148">
    <property type="pathway name" value="CDC42 GTPase cycle"/>
</dbReference>
<dbReference type="Reactome" id="R-CEL-9013149">
    <property type="pathway name" value="RAC1 GTPase cycle"/>
</dbReference>
<dbReference type="Reactome" id="R-CEL-9013404">
    <property type="pathway name" value="RAC2 GTPase cycle"/>
</dbReference>
<dbReference type="Reactome" id="R-CEL-9013407">
    <property type="pathway name" value="RHOH GTPase cycle"/>
</dbReference>
<dbReference type="Reactome" id="R-CEL-9013408">
    <property type="pathway name" value="RHOG GTPase cycle"/>
</dbReference>
<dbReference type="Reactome" id="R-CEL-9013423">
    <property type="pathway name" value="RAC3 GTPase cycle"/>
</dbReference>
<dbReference type="PRO" id="PR:Q20496"/>
<dbReference type="Proteomes" id="UP000001940">
    <property type="component" value="Chromosome X"/>
</dbReference>
<dbReference type="Bgee" id="WBGene00004356">
    <property type="expression patterns" value="Expressed in pharyngeal muscle cell (C elegans) and 4 other cell types or tissues"/>
</dbReference>
<dbReference type="GO" id="GO:0005829">
    <property type="term" value="C:cytosol"/>
    <property type="evidence" value="ECO:0000314"/>
    <property type="project" value="WormBase"/>
</dbReference>
<dbReference type="GO" id="GO:0016020">
    <property type="term" value="C:membrane"/>
    <property type="evidence" value="ECO:0000314"/>
    <property type="project" value="WormBase"/>
</dbReference>
<dbReference type="GO" id="GO:0005096">
    <property type="term" value="F:GTPase activator activity"/>
    <property type="evidence" value="ECO:0007669"/>
    <property type="project" value="UniProtKB-KW"/>
</dbReference>
<dbReference type="GO" id="GO:0005094">
    <property type="term" value="F:Rho GDP-dissociation inhibitor activity"/>
    <property type="evidence" value="ECO:0000318"/>
    <property type="project" value="GO_Central"/>
</dbReference>
<dbReference type="GO" id="GO:0007266">
    <property type="term" value="P:Rho protein signal transduction"/>
    <property type="evidence" value="ECO:0000318"/>
    <property type="project" value="GO_Central"/>
</dbReference>
<dbReference type="FunFam" id="2.70.50.30:FF:000004">
    <property type="entry name" value="Rho GDP-dissociation inhibitor 1"/>
    <property type="match status" value="1"/>
</dbReference>
<dbReference type="Gene3D" id="2.70.50.30">
    <property type="entry name" value="Coagulation Factor XIII, subunit A, domain 1"/>
    <property type="match status" value="1"/>
</dbReference>
<dbReference type="InterPro" id="IPR014756">
    <property type="entry name" value="Ig_E-set"/>
</dbReference>
<dbReference type="InterPro" id="IPR000406">
    <property type="entry name" value="Rho_GDI"/>
</dbReference>
<dbReference type="InterPro" id="IPR024792">
    <property type="entry name" value="RhoGDI_dom_sf"/>
</dbReference>
<dbReference type="PANTHER" id="PTHR10980:SF3">
    <property type="entry name" value="LD16419P"/>
    <property type="match status" value="1"/>
</dbReference>
<dbReference type="PANTHER" id="PTHR10980">
    <property type="entry name" value="RHO GDP-DISSOCIATION INHIBITOR"/>
    <property type="match status" value="1"/>
</dbReference>
<dbReference type="Pfam" id="PF02115">
    <property type="entry name" value="Rho_GDI"/>
    <property type="match status" value="1"/>
</dbReference>
<dbReference type="PRINTS" id="PR00492">
    <property type="entry name" value="RHOGDI"/>
</dbReference>
<dbReference type="SUPFAM" id="SSF81296">
    <property type="entry name" value="E set domains"/>
    <property type="match status" value="1"/>
</dbReference>
<proteinExistence type="inferred from homology"/>
<protein>
    <recommendedName>
        <fullName>Probable rho GDP-dissociation inhibitor</fullName>
        <shortName>Rho GDI</shortName>
    </recommendedName>
</protein>
<reference key="1">
    <citation type="journal article" date="1998" name="Science">
        <title>Genome sequence of the nematode C. elegans: a platform for investigating biology.</title>
        <authorList>
            <consortium name="The C. elegans sequencing consortium"/>
        </authorList>
    </citation>
    <scope>NUCLEOTIDE SEQUENCE [LARGE SCALE GENOMIC DNA]</scope>
    <source>
        <strain>Bristol N2</strain>
    </source>
</reference>
<accession>Q20496</accession>
<sequence>MSDHENTGENTSEYQYKQPPQKSIDELLNADKEDESLKVYKAKLLGQGTVIVDEKNPLRVIVRSVELLINGKTAQSFDLSDPAKLVNSDLSVSIKEGSNYRLSFAFHVQREITSGLHYKHKVKRSGITVENEKYMMGSYAPKLEIQEYKSPNEEAPSGMMHRGKYKVYSKITDDDNNVYLDWQWTLHITKE</sequence>
<gene>
    <name type="primary">rhi-1</name>
    <name type="ORF">F46H6.1</name>
</gene>
<keyword id="KW-0963">Cytoplasm</keyword>
<keyword id="KW-0343">GTPase activation</keyword>
<keyword id="KW-1185">Reference proteome</keyword>
<feature type="chain" id="PRO_0000219020" description="Probable rho GDP-dissociation inhibitor">
    <location>
        <begin position="1"/>
        <end position="191"/>
    </location>
</feature>
<feature type="region of interest" description="Disordered" evidence="2">
    <location>
        <begin position="1"/>
        <end position="22"/>
    </location>
</feature>
<feature type="compositionally biased region" description="Polar residues" evidence="2">
    <location>
        <begin position="8"/>
        <end position="21"/>
    </location>
</feature>